<reference key="1">
    <citation type="journal article" date="2008" name="BMC Genomics">
        <title>Genomics of an extreme psychrophile, Psychromonas ingrahamii.</title>
        <authorList>
            <person name="Riley M."/>
            <person name="Staley J.T."/>
            <person name="Danchin A."/>
            <person name="Wang T.Z."/>
            <person name="Brettin T.S."/>
            <person name="Hauser L.J."/>
            <person name="Land M.L."/>
            <person name="Thompson L.S."/>
        </authorList>
    </citation>
    <scope>NUCLEOTIDE SEQUENCE [LARGE SCALE GENOMIC DNA]</scope>
    <source>
        <strain>DSM 17664 / CCUG 51855 / 37</strain>
    </source>
</reference>
<evidence type="ECO:0000255" key="1">
    <source>
        <dbReference type="HAMAP-Rule" id="MF_01661"/>
    </source>
</evidence>
<protein>
    <recommendedName>
        <fullName evidence="1">D-ribose pyranase</fullName>
        <ecNumber evidence="1">5.4.99.62</ecNumber>
    </recommendedName>
</protein>
<accession>A1SRU1</accession>
<organism>
    <name type="scientific">Psychromonas ingrahamii (strain DSM 17664 / CCUG 51855 / 37)</name>
    <dbReference type="NCBI Taxonomy" id="357804"/>
    <lineage>
        <taxon>Bacteria</taxon>
        <taxon>Pseudomonadati</taxon>
        <taxon>Pseudomonadota</taxon>
        <taxon>Gammaproteobacteria</taxon>
        <taxon>Alteromonadales</taxon>
        <taxon>Psychromonadaceae</taxon>
        <taxon>Psychromonas</taxon>
    </lineage>
</organism>
<comment type="function">
    <text evidence="1">Catalyzes the interconversion of beta-pyran and beta-furan forms of D-ribose.</text>
</comment>
<comment type="catalytic activity">
    <reaction evidence="1">
        <text>beta-D-ribopyranose = beta-D-ribofuranose</text>
        <dbReference type="Rhea" id="RHEA:25432"/>
        <dbReference type="ChEBI" id="CHEBI:27476"/>
        <dbReference type="ChEBI" id="CHEBI:47002"/>
        <dbReference type="EC" id="5.4.99.62"/>
    </reaction>
</comment>
<comment type="pathway">
    <text evidence="1">Carbohydrate metabolism; D-ribose degradation; D-ribose 5-phosphate from beta-D-ribopyranose: step 1/2.</text>
</comment>
<comment type="subunit">
    <text evidence="1">Homodecamer.</text>
</comment>
<comment type="subcellular location">
    <subcellularLocation>
        <location evidence="1">Cytoplasm</location>
    </subcellularLocation>
</comment>
<comment type="similarity">
    <text evidence="1">Belongs to the RbsD / FucU family. RbsD subfamily.</text>
</comment>
<name>RBSD_PSYIN</name>
<proteinExistence type="inferred from homology"/>
<feature type="chain" id="PRO_0000346244" description="D-ribose pyranase">
    <location>
        <begin position="1"/>
        <end position="138"/>
    </location>
</feature>
<feature type="active site" description="Proton donor" evidence="1">
    <location>
        <position position="20"/>
    </location>
</feature>
<feature type="binding site" evidence="1">
    <location>
        <position position="28"/>
    </location>
    <ligand>
        <name>substrate</name>
    </ligand>
</feature>
<feature type="binding site" evidence="1">
    <location>
        <position position="105"/>
    </location>
    <ligand>
        <name>substrate</name>
    </ligand>
</feature>
<feature type="binding site" evidence="1">
    <location>
        <begin position="127"/>
        <end position="129"/>
    </location>
    <ligand>
        <name>substrate</name>
    </ligand>
</feature>
<sequence length="138" mass="15213">MKKTALLNAELSYLVASLGHFDEITICDAGLPIPNETQRIDLALTHGVPAFIDTVRVILSEMQITGVLLASEFKQVSPDLHRALIELVEQEKLAGSRIELIYISHEAFKERTSNSKAVVRTGECTPYANVIFQSGVVF</sequence>
<dbReference type="EC" id="5.4.99.62" evidence="1"/>
<dbReference type="EMBL" id="CP000510">
    <property type="protein sequence ID" value="ABM02206.1"/>
    <property type="molecule type" value="Genomic_DNA"/>
</dbReference>
<dbReference type="RefSeq" id="WP_011768765.1">
    <property type="nucleotide sequence ID" value="NC_008709.1"/>
</dbReference>
<dbReference type="SMR" id="A1SRU1"/>
<dbReference type="STRING" id="357804.Ping_0340"/>
<dbReference type="KEGG" id="pin:Ping_0340"/>
<dbReference type="eggNOG" id="COG1869">
    <property type="taxonomic scope" value="Bacteria"/>
</dbReference>
<dbReference type="HOGENOM" id="CLU_135498_0_0_6"/>
<dbReference type="OrthoDB" id="9805009at2"/>
<dbReference type="UniPathway" id="UPA00916">
    <property type="reaction ID" value="UER00888"/>
</dbReference>
<dbReference type="Proteomes" id="UP000000639">
    <property type="component" value="Chromosome"/>
</dbReference>
<dbReference type="GO" id="GO:0005829">
    <property type="term" value="C:cytosol"/>
    <property type="evidence" value="ECO:0007669"/>
    <property type="project" value="TreeGrafter"/>
</dbReference>
<dbReference type="GO" id="GO:0062193">
    <property type="term" value="F:D-ribose pyranase activity"/>
    <property type="evidence" value="ECO:0007669"/>
    <property type="project" value="UniProtKB-EC"/>
</dbReference>
<dbReference type="GO" id="GO:0016872">
    <property type="term" value="F:intramolecular lyase activity"/>
    <property type="evidence" value="ECO:0007669"/>
    <property type="project" value="UniProtKB-UniRule"/>
</dbReference>
<dbReference type="GO" id="GO:0048029">
    <property type="term" value="F:monosaccharide binding"/>
    <property type="evidence" value="ECO:0007669"/>
    <property type="project" value="InterPro"/>
</dbReference>
<dbReference type="GO" id="GO:0019303">
    <property type="term" value="P:D-ribose catabolic process"/>
    <property type="evidence" value="ECO:0007669"/>
    <property type="project" value="UniProtKB-UniRule"/>
</dbReference>
<dbReference type="Gene3D" id="3.40.1650.10">
    <property type="entry name" value="RbsD-like domain"/>
    <property type="match status" value="1"/>
</dbReference>
<dbReference type="HAMAP" id="MF_01661">
    <property type="entry name" value="D_rib_pyranase"/>
    <property type="match status" value="1"/>
</dbReference>
<dbReference type="InterPro" id="IPR023064">
    <property type="entry name" value="D-ribose_pyranase"/>
</dbReference>
<dbReference type="InterPro" id="IPR023750">
    <property type="entry name" value="RbsD-like_sf"/>
</dbReference>
<dbReference type="InterPro" id="IPR007721">
    <property type="entry name" value="RbsD_FucU"/>
</dbReference>
<dbReference type="NCBIfam" id="NF008761">
    <property type="entry name" value="PRK11797.1"/>
    <property type="match status" value="1"/>
</dbReference>
<dbReference type="PANTHER" id="PTHR37831">
    <property type="entry name" value="D-RIBOSE PYRANASE"/>
    <property type="match status" value="1"/>
</dbReference>
<dbReference type="PANTHER" id="PTHR37831:SF1">
    <property type="entry name" value="D-RIBOSE PYRANASE"/>
    <property type="match status" value="1"/>
</dbReference>
<dbReference type="Pfam" id="PF05025">
    <property type="entry name" value="RbsD_FucU"/>
    <property type="match status" value="1"/>
</dbReference>
<dbReference type="SUPFAM" id="SSF102546">
    <property type="entry name" value="RbsD-like"/>
    <property type="match status" value="1"/>
</dbReference>
<gene>
    <name evidence="1" type="primary">rbsD</name>
    <name type="ordered locus">Ping_0340</name>
</gene>
<keyword id="KW-0119">Carbohydrate metabolism</keyword>
<keyword id="KW-0963">Cytoplasm</keyword>
<keyword id="KW-0413">Isomerase</keyword>
<keyword id="KW-1185">Reference proteome</keyword>